<protein>
    <recommendedName>
        <fullName evidence="1">Phosphoribosylaminoimidazole-succinocarboxamide synthase</fullName>
        <ecNumber evidence="1">6.3.2.6</ecNumber>
    </recommendedName>
    <alternativeName>
        <fullName evidence="1">SAICAR synthetase</fullName>
    </alternativeName>
</protein>
<name>PUR7_CLOB8</name>
<accession>A6LSA9</accession>
<reference key="1">
    <citation type="submission" date="2007-06" db="EMBL/GenBank/DDBJ databases">
        <title>Complete sequence of Clostridium beijerinckii NCIMB 8052.</title>
        <authorList>
            <consortium name="US DOE Joint Genome Institute"/>
            <person name="Copeland A."/>
            <person name="Lucas S."/>
            <person name="Lapidus A."/>
            <person name="Barry K."/>
            <person name="Detter J.C."/>
            <person name="Glavina del Rio T."/>
            <person name="Hammon N."/>
            <person name="Israni S."/>
            <person name="Dalin E."/>
            <person name="Tice H."/>
            <person name="Pitluck S."/>
            <person name="Sims D."/>
            <person name="Brettin T."/>
            <person name="Bruce D."/>
            <person name="Tapia R."/>
            <person name="Brainard J."/>
            <person name="Schmutz J."/>
            <person name="Larimer F."/>
            <person name="Land M."/>
            <person name="Hauser L."/>
            <person name="Kyrpides N."/>
            <person name="Mikhailova N."/>
            <person name="Bennet G."/>
            <person name="Cann I."/>
            <person name="Chen J.-S."/>
            <person name="Contreras A.L."/>
            <person name="Jones D."/>
            <person name="Kashket E."/>
            <person name="Mitchell W."/>
            <person name="Stoddard S."/>
            <person name="Schwarz W."/>
            <person name="Qureshi N."/>
            <person name="Young M."/>
            <person name="Shi Z."/>
            <person name="Ezeji T."/>
            <person name="White B."/>
            <person name="Blaschek H."/>
            <person name="Richardson P."/>
        </authorList>
    </citation>
    <scope>NUCLEOTIDE SEQUENCE [LARGE SCALE GENOMIC DNA]</scope>
    <source>
        <strain>ATCC 51743 / NCIMB 8052</strain>
    </source>
</reference>
<proteinExistence type="inferred from homology"/>
<gene>
    <name evidence="1" type="primary">purC</name>
    <name type="ordered locus">Cbei_1055</name>
</gene>
<keyword id="KW-0067">ATP-binding</keyword>
<keyword id="KW-0436">Ligase</keyword>
<keyword id="KW-0547">Nucleotide-binding</keyword>
<keyword id="KW-0658">Purine biosynthesis</keyword>
<dbReference type="EC" id="6.3.2.6" evidence="1"/>
<dbReference type="EMBL" id="CP000721">
    <property type="protein sequence ID" value="ABR33239.1"/>
    <property type="molecule type" value="Genomic_DNA"/>
</dbReference>
<dbReference type="RefSeq" id="WP_011968398.1">
    <property type="nucleotide sequence ID" value="NC_009617.1"/>
</dbReference>
<dbReference type="SMR" id="A6LSA9"/>
<dbReference type="GeneID" id="66343989"/>
<dbReference type="KEGG" id="cbe:Cbei_1055"/>
<dbReference type="eggNOG" id="COG0152">
    <property type="taxonomic scope" value="Bacteria"/>
</dbReference>
<dbReference type="HOGENOM" id="CLU_061495_2_0_9"/>
<dbReference type="UniPathway" id="UPA00074">
    <property type="reaction ID" value="UER00131"/>
</dbReference>
<dbReference type="Proteomes" id="UP000000565">
    <property type="component" value="Chromosome"/>
</dbReference>
<dbReference type="GO" id="GO:0005524">
    <property type="term" value="F:ATP binding"/>
    <property type="evidence" value="ECO:0007669"/>
    <property type="project" value="UniProtKB-KW"/>
</dbReference>
<dbReference type="GO" id="GO:0004639">
    <property type="term" value="F:phosphoribosylaminoimidazolesuccinocarboxamide synthase activity"/>
    <property type="evidence" value="ECO:0007669"/>
    <property type="project" value="UniProtKB-UniRule"/>
</dbReference>
<dbReference type="GO" id="GO:0006189">
    <property type="term" value="P:'de novo' IMP biosynthetic process"/>
    <property type="evidence" value="ECO:0007669"/>
    <property type="project" value="UniProtKB-UniRule"/>
</dbReference>
<dbReference type="GO" id="GO:0009236">
    <property type="term" value="P:cobalamin biosynthetic process"/>
    <property type="evidence" value="ECO:0007669"/>
    <property type="project" value="InterPro"/>
</dbReference>
<dbReference type="CDD" id="cd01415">
    <property type="entry name" value="SAICAR_synt_PurC"/>
    <property type="match status" value="1"/>
</dbReference>
<dbReference type="FunFam" id="3.30.200.20:FF:000189">
    <property type="entry name" value="Phosphoribosylaminoimidazole-succinocarboxamide synthase"/>
    <property type="match status" value="1"/>
</dbReference>
<dbReference type="FunFam" id="3.30.470.20:FF:000006">
    <property type="entry name" value="Phosphoribosylaminoimidazole-succinocarboxamide synthase"/>
    <property type="match status" value="1"/>
</dbReference>
<dbReference type="Gene3D" id="3.30.470.20">
    <property type="entry name" value="ATP-grasp fold, B domain"/>
    <property type="match status" value="1"/>
</dbReference>
<dbReference type="Gene3D" id="3.30.200.20">
    <property type="entry name" value="Phosphorylase Kinase, domain 1"/>
    <property type="match status" value="1"/>
</dbReference>
<dbReference type="HAMAP" id="MF_00137">
    <property type="entry name" value="SAICAR_synth"/>
    <property type="match status" value="1"/>
</dbReference>
<dbReference type="InterPro" id="IPR028923">
    <property type="entry name" value="SAICAR_synt/ADE2_N"/>
</dbReference>
<dbReference type="InterPro" id="IPR033934">
    <property type="entry name" value="SAICAR_synt_PurC"/>
</dbReference>
<dbReference type="InterPro" id="IPR001636">
    <property type="entry name" value="SAICAR_synth"/>
</dbReference>
<dbReference type="InterPro" id="IPR050089">
    <property type="entry name" value="SAICAR_synthetase"/>
</dbReference>
<dbReference type="InterPro" id="IPR018236">
    <property type="entry name" value="SAICAR_synthetase_CS"/>
</dbReference>
<dbReference type="NCBIfam" id="TIGR00081">
    <property type="entry name" value="purC"/>
    <property type="match status" value="1"/>
</dbReference>
<dbReference type="PANTHER" id="PTHR43599">
    <property type="entry name" value="MULTIFUNCTIONAL PROTEIN ADE2"/>
    <property type="match status" value="1"/>
</dbReference>
<dbReference type="PANTHER" id="PTHR43599:SF3">
    <property type="entry name" value="SI:DKEY-6E2.2"/>
    <property type="match status" value="1"/>
</dbReference>
<dbReference type="Pfam" id="PF01259">
    <property type="entry name" value="SAICAR_synt"/>
    <property type="match status" value="1"/>
</dbReference>
<dbReference type="SUPFAM" id="SSF56104">
    <property type="entry name" value="SAICAR synthase-like"/>
    <property type="match status" value="1"/>
</dbReference>
<dbReference type="PROSITE" id="PS01057">
    <property type="entry name" value="SAICAR_SYNTHETASE_1"/>
    <property type="match status" value="1"/>
</dbReference>
<evidence type="ECO:0000255" key="1">
    <source>
        <dbReference type="HAMAP-Rule" id="MF_00137"/>
    </source>
</evidence>
<feature type="chain" id="PRO_1000076449" description="Phosphoribosylaminoimidazole-succinocarboxamide synthase">
    <location>
        <begin position="1"/>
        <end position="235"/>
    </location>
</feature>
<comment type="catalytic activity">
    <reaction evidence="1">
        <text>5-amino-1-(5-phospho-D-ribosyl)imidazole-4-carboxylate + L-aspartate + ATP = (2S)-2-[5-amino-1-(5-phospho-beta-D-ribosyl)imidazole-4-carboxamido]succinate + ADP + phosphate + 2 H(+)</text>
        <dbReference type="Rhea" id="RHEA:22628"/>
        <dbReference type="ChEBI" id="CHEBI:15378"/>
        <dbReference type="ChEBI" id="CHEBI:29991"/>
        <dbReference type="ChEBI" id="CHEBI:30616"/>
        <dbReference type="ChEBI" id="CHEBI:43474"/>
        <dbReference type="ChEBI" id="CHEBI:58443"/>
        <dbReference type="ChEBI" id="CHEBI:77657"/>
        <dbReference type="ChEBI" id="CHEBI:456216"/>
        <dbReference type="EC" id="6.3.2.6"/>
    </reaction>
</comment>
<comment type="pathway">
    <text evidence="1">Purine metabolism; IMP biosynthesis via de novo pathway; 5-amino-1-(5-phospho-D-ribosyl)imidazole-4-carboxamide from 5-amino-1-(5-phospho-D-ribosyl)imidazole-4-carboxylate: step 1/2.</text>
</comment>
<comment type="similarity">
    <text evidence="1">Belongs to the SAICAR synthetase family.</text>
</comment>
<organism>
    <name type="scientific">Clostridium beijerinckii (strain ATCC 51743 / NCIMB 8052)</name>
    <name type="common">Clostridium acetobutylicum</name>
    <dbReference type="NCBI Taxonomy" id="290402"/>
    <lineage>
        <taxon>Bacteria</taxon>
        <taxon>Bacillati</taxon>
        <taxon>Bacillota</taxon>
        <taxon>Clostridia</taxon>
        <taxon>Eubacteriales</taxon>
        <taxon>Clostridiaceae</taxon>
        <taxon>Clostridium</taxon>
    </lineage>
</organism>
<sequence>MEKLEMLYEGKAKKIYATDKADEVIVYYKDDATAFNGEKKGQIEDKGIMNNAITSVLFEILEKAGVKTHFIEKLNDREQLCKKVEIVPLEVIVRNVAAGSMAKRLGLEEGFKLKTTVFELSYKDDSLGDPLINDYHAVGIGATTFEELKVIYDMTAKINDTLKAVFKEQNINLIDFKVEFGRCADGTIVLADEISPDTCRFWDATTGEKLDKDRFRRDLGNVKDAYVEILKRISK</sequence>